<comment type="function">
    <text evidence="1">Catalyzes the attachment of tyrosine to tRNA(Tyr) in a two-step reaction: tyrosine is first activated by ATP to form Tyr-AMP and then transferred to the acceptor end of tRNA(Tyr).</text>
</comment>
<comment type="catalytic activity">
    <reaction evidence="1">
        <text>tRNA(Tyr) + L-tyrosine + ATP = L-tyrosyl-tRNA(Tyr) + AMP + diphosphate + H(+)</text>
        <dbReference type="Rhea" id="RHEA:10220"/>
        <dbReference type="Rhea" id="RHEA-COMP:9706"/>
        <dbReference type="Rhea" id="RHEA-COMP:9707"/>
        <dbReference type="ChEBI" id="CHEBI:15378"/>
        <dbReference type="ChEBI" id="CHEBI:30616"/>
        <dbReference type="ChEBI" id="CHEBI:33019"/>
        <dbReference type="ChEBI" id="CHEBI:58315"/>
        <dbReference type="ChEBI" id="CHEBI:78442"/>
        <dbReference type="ChEBI" id="CHEBI:78536"/>
        <dbReference type="ChEBI" id="CHEBI:456215"/>
        <dbReference type="EC" id="6.1.1.1"/>
    </reaction>
</comment>
<comment type="subunit">
    <text evidence="1">Homodimer.</text>
</comment>
<comment type="subcellular location">
    <subcellularLocation>
        <location evidence="1">Cytoplasm</location>
    </subcellularLocation>
</comment>
<comment type="similarity">
    <text evidence="1">Belongs to the class-I aminoacyl-tRNA synthetase family. TyrS type 2 subfamily.</text>
</comment>
<name>SYY_HELHP</name>
<sequence>MKIKQAMQEISRGCVEFIGEEYIRDLVERFYNTGERFCVKAGFDPTAPDLHLGHTVLLQKLATFQRYGGDVKFLIGDFTATIGDPSGKSETRKPLSAEQVKANALTYKEQVFKVLDPQYTQICFNSKWLNELGALGLITLTSHFSVARMLERDDFTKRYNNNQSISIVEFIYPLLQGYDSVALNCDIELGGNDQKFNLLVGRSLQRAYKLNKEQSVMTLPLLEGLDGVHKMSKSLNNYIGVTESANTMYAKILSINDEMMWRYYELLSSLSLQEIVMLKEQVNTGNAHPKAVKEQLALEITTRYHNIDLAKQAKIAFDNVFSKDEIPTDLAVFTCNEGEWIARVLVIAGLCESTSQARRDIRAGALKINKEKIMNEELKLSVGEYIVQIGKRRFAKVIIS</sequence>
<accession>Q7VHY1</accession>
<organism>
    <name type="scientific">Helicobacter hepaticus (strain ATCC 51449 / 3B1)</name>
    <dbReference type="NCBI Taxonomy" id="235279"/>
    <lineage>
        <taxon>Bacteria</taxon>
        <taxon>Pseudomonadati</taxon>
        <taxon>Campylobacterota</taxon>
        <taxon>Epsilonproteobacteria</taxon>
        <taxon>Campylobacterales</taxon>
        <taxon>Helicobacteraceae</taxon>
        <taxon>Helicobacter</taxon>
    </lineage>
</organism>
<proteinExistence type="inferred from homology"/>
<evidence type="ECO:0000255" key="1">
    <source>
        <dbReference type="HAMAP-Rule" id="MF_02007"/>
    </source>
</evidence>
<reference key="1">
    <citation type="journal article" date="2003" name="Proc. Natl. Acad. Sci. U.S.A.">
        <title>The complete genome sequence of the carcinogenic bacterium Helicobacter hepaticus.</title>
        <authorList>
            <person name="Suerbaum S."/>
            <person name="Josenhans C."/>
            <person name="Sterzenbach T."/>
            <person name="Drescher B."/>
            <person name="Brandt P."/>
            <person name="Bell M."/>
            <person name="Droege M."/>
            <person name="Fartmann B."/>
            <person name="Fischer H.-P."/>
            <person name="Ge Z."/>
            <person name="Hoerster A."/>
            <person name="Holland R."/>
            <person name="Klein K."/>
            <person name="Koenig J."/>
            <person name="Macko L."/>
            <person name="Mendz G.L."/>
            <person name="Nyakatura G."/>
            <person name="Schauer D.B."/>
            <person name="Shen Z."/>
            <person name="Weber J."/>
            <person name="Frosch M."/>
            <person name="Fox J.G."/>
        </authorList>
    </citation>
    <scope>NUCLEOTIDE SEQUENCE [LARGE SCALE GENOMIC DNA]</scope>
    <source>
        <strain>ATCC 51449 / 3B1</strain>
    </source>
</reference>
<keyword id="KW-0030">Aminoacyl-tRNA synthetase</keyword>
<keyword id="KW-0067">ATP-binding</keyword>
<keyword id="KW-0963">Cytoplasm</keyword>
<keyword id="KW-0436">Ligase</keyword>
<keyword id="KW-0547">Nucleotide-binding</keyword>
<keyword id="KW-0648">Protein biosynthesis</keyword>
<keyword id="KW-1185">Reference proteome</keyword>
<keyword id="KW-0694">RNA-binding</keyword>
<dbReference type="EC" id="6.1.1.1" evidence="1"/>
<dbReference type="EMBL" id="AE017125">
    <property type="protein sequence ID" value="AAP77427.1"/>
    <property type="molecule type" value="Genomic_DNA"/>
</dbReference>
<dbReference type="RefSeq" id="WP_011115670.1">
    <property type="nucleotide sequence ID" value="NC_004917.1"/>
</dbReference>
<dbReference type="SMR" id="Q7VHY1"/>
<dbReference type="STRING" id="235279.HH_0830"/>
<dbReference type="KEGG" id="hhe:HH_0830"/>
<dbReference type="eggNOG" id="COG0162">
    <property type="taxonomic scope" value="Bacteria"/>
</dbReference>
<dbReference type="HOGENOM" id="CLU_024003_5_0_7"/>
<dbReference type="OrthoDB" id="9804243at2"/>
<dbReference type="Proteomes" id="UP000002495">
    <property type="component" value="Chromosome"/>
</dbReference>
<dbReference type="GO" id="GO:0005829">
    <property type="term" value="C:cytosol"/>
    <property type="evidence" value="ECO:0007669"/>
    <property type="project" value="TreeGrafter"/>
</dbReference>
<dbReference type="GO" id="GO:0005524">
    <property type="term" value="F:ATP binding"/>
    <property type="evidence" value="ECO:0007669"/>
    <property type="project" value="UniProtKB-UniRule"/>
</dbReference>
<dbReference type="GO" id="GO:0003723">
    <property type="term" value="F:RNA binding"/>
    <property type="evidence" value="ECO:0007669"/>
    <property type="project" value="UniProtKB-KW"/>
</dbReference>
<dbReference type="GO" id="GO:0004831">
    <property type="term" value="F:tyrosine-tRNA ligase activity"/>
    <property type="evidence" value="ECO:0007669"/>
    <property type="project" value="UniProtKB-UniRule"/>
</dbReference>
<dbReference type="GO" id="GO:0006437">
    <property type="term" value="P:tyrosyl-tRNA aminoacylation"/>
    <property type="evidence" value="ECO:0007669"/>
    <property type="project" value="UniProtKB-UniRule"/>
</dbReference>
<dbReference type="CDD" id="cd00165">
    <property type="entry name" value="S4"/>
    <property type="match status" value="1"/>
</dbReference>
<dbReference type="CDD" id="cd00805">
    <property type="entry name" value="TyrRS_core"/>
    <property type="match status" value="1"/>
</dbReference>
<dbReference type="FunFam" id="1.10.240.10:FF:000006">
    <property type="entry name" value="Tyrosine--tRNA ligase"/>
    <property type="match status" value="1"/>
</dbReference>
<dbReference type="FunFam" id="3.40.50.620:FF:000061">
    <property type="entry name" value="Tyrosine--tRNA ligase"/>
    <property type="match status" value="1"/>
</dbReference>
<dbReference type="Gene3D" id="3.40.50.620">
    <property type="entry name" value="HUPs"/>
    <property type="match status" value="1"/>
</dbReference>
<dbReference type="Gene3D" id="3.10.290.10">
    <property type="entry name" value="RNA-binding S4 domain"/>
    <property type="match status" value="1"/>
</dbReference>
<dbReference type="Gene3D" id="1.10.240.10">
    <property type="entry name" value="Tyrosyl-Transfer RNA Synthetase"/>
    <property type="match status" value="1"/>
</dbReference>
<dbReference type="HAMAP" id="MF_02007">
    <property type="entry name" value="Tyr_tRNA_synth_type2"/>
    <property type="match status" value="1"/>
</dbReference>
<dbReference type="InterPro" id="IPR001412">
    <property type="entry name" value="aa-tRNA-synth_I_CS"/>
</dbReference>
<dbReference type="InterPro" id="IPR002305">
    <property type="entry name" value="aa-tRNA-synth_Ic"/>
</dbReference>
<dbReference type="InterPro" id="IPR014729">
    <property type="entry name" value="Rossmann-like_a/b/a_fold"/>
</dbReference>
<dbReference type="InterPro" id="IPR002942">
    <property type="entry name" value="S4_RNA-bd"/>
</dbReference>
<dbReference type="InterPro" id="IPR036986">
    <property type="entry name" value="S4_RNA-bd_sf"/>
</dbReference>
<dbReference type="InterPro" id="IPR054608">
    <property type="entry name" value="SYY-like_C"/>
</dbReference>
<dbReference type="InterPro" id="IPR002307">
    <property type="entry name" value="Tyr-tRNA-ligase"/>
</dbReference>
<dbReference type="InterPro" id="IPR024088">
    <property type="entry name" value="Tyr-tRNA-ligase_bac-type"/>
</dbReference>
<dbReference type="InterPro" id="IPR024108">
    <property type="entry name" value="Tyr-tRNA-ligase_bac_2"/>
</dbReference>
<dbReference type="NCBIfam" id="TIGR00234">
    <property type="entry name" value="tyrS"/>
    <property type="match status" value="1"/>
</dbReference>
<dbReference type="PANTHER" id="PTHR11766:SF1">
    <property type="entry name" value="TYROSINE--TRNA LIGASE"/>
    <property type="match status" value="1"/>
</dbReference>
<dbReference type="PANTHER" id="PTHR11766">
    <property type="entry name" value="TYROSYL-TRNA SYNTHETASE"/>
    <property type="match status" value="1"/>
</dbReference>
<dbReference type="Pfam" id="PF22421">
    <property type="entry name" value="SYY_C-terminal"/>
    <property type="match status" value="1"/>
</dbReference>
<dbReference type="Pfam" id="PF00579">
    <property type="entry name" value="tRNA-synt_1b"/>
    <property type="match status" value="1"/>
</dbReference>
<dbReference type="PRINTS" id="PR01040">
    <property type="entry name" value="TRNASYNTHTYR"/>
</dbReference>
<dbReference type="SMART" id="SM00363">
    <property type="entry name" value="S4"/>
    <property type="match status" value="1"/>
</dbReference>
<dbReference type="SUPFAM" id="SSF55174">
    <property type="entry name" value="Alpha-L RNA-binding motif"/>
    <property type="match status" value="1"/>
</dbReference>
<dbReference type="SUPFAM" id="SSF52374">
    <property type="entry name" value="Nucleotidylyl transferase"/>
    <property type="match status" value="1"/>
</dbReference>
<dbReference type="PROSITE" id="PS00178">
    <property type="entry name" value="AA_TRNA_LIGASE_I"/>
    <property type="match status" value="1"/>
</dbReference>
<dbReference type="PROSITE" id="PS50889">
    <property type="entry name" value="S4"/>
    <property type="match status" value="1"/>
</dbReference>
<gene>
    <name evidence="1" type="primary">tyrS</name>
    <name type="ordered locus">HH_0830</name>
</gene>
<feature type="chain" id="PRO_0000236726" description="Tyrosine--tRNA ligase">
    <location>
        <begin position="1"/>
        <end position="400"/>
    </location>
</feature>
<feature type="domain" description="S4 RNA-binding" evidence="1">
    <location>
        <begin position="339"/>
        <end position="399"/>
    </location>
</feature>
<feature type="short sequence motif" description="'HIGH' region">
    <location>
        <begin position="45"/>
        <end position="54"/>
    </location>
</feature>
<feature type="short sequence motif" description="'KMSKS' region">
    <location>
        <begin position="230"/>
        <end position="234"/>
    </location>
</feature>
<feature type="binding site" evidence="1">
    <location>
        <position position="233"/>
    </location>
    <ligand>
        <name>ATP</name>
        <dbReference type="ChEBI" id="CHEBI:30616"/>
    </ligand>
</feature>
<protein>
    <recommendedName>
        <fullName evidence="1">Tyrosine--tRNA ligase</fullName>
        <ecNumber evidence="1">6.1.1.1</ecNumber>
    </recommendedName>
    <alternativeName>
        <fullName evidence="1">Tyrosyl-tRNA synthetase</fullName>
        <shortName evidence="1">TyrRS</shortName>
    </alternativeName>
</protein>